<dbReference type="EC" id="3.1.-.-"/>
<dbReference type="EMBL" id="AE000511">
    <property type="protein sequence ID" value="AAD08011.1"/>
    <property type="molecule type" value="Genomic_DNA"/>
</dbReference>
<dbReference type="PIR" id="G64640">
    <property type="entry name" value="G64640"/>
</dbReference>
<dbReference type="RefSeq" id="NP_207759.1">
    <property type="nucleotide sequence ID" value="NC_000915.1"/>
</dbReference>
<dbReference type="RefSeq" id="WP_000271456.1">
    <property type="nucleotide sequence ID" value="NC_018939.1"/>
</dbReference>
<dbReference type="SMR" id="O25620"/>
<dbReference type="IntAct" id="O25620">
    <property type="interactions" value="2"/>
</dbReference>
<dbReference type="STRING" id="85962.HP_0967"/>
<dbReference type="PaxDb" id="85962-C694_04980"/>
<dbReference type="EnsemblBacteria" id="AAD08011">
    <property type="protein sequence ID" value="AAD08011"/>
    <property type="gene ID" value="HP_0967"/>
</dbReference>
<dbReference type="KEGG" id="heo:C694_04980"/>
<dbReference type="KEGG" id="hpy:HP_0967"/>
<dbReference type="PATRIC" id="fig|85962.47.peg.1035"/>
<dbReference type="eggNOG" id="COG3309">
    <property type="taxonomic scope" value="Bacteria"/>
</dbReference>
<dbReference type="InParanoid" id="O25620"/>
<dbReference type="OrthoDB" id="8611858at2"/>
<dbReference type="Proteomes" id="UP000000429">
    <property type="component" value="Chromosome"/>
</dbReference>
<dbReference type="GO" id="GO:0004518">
    <property type="term" value="F:nuclease activity"/>
    <property type="evidence" value="ECO:0007669"/>
    <property type="project" value="UniProtKB-KW"/>
</dbReference>
<dbReference type="GO" id="GO:0003723">
    <property type="term" value="F:RNA binding"/>
    <property type="evidence" value="ECO:0007669"/>
    <property type="project" value="InterPro"/>
</dbReference>
<dbReference type="Gene3D" id="3.30.70.240">
    <property type="match status" value="1"/>
</dbReference>
<dbReference type="InterPro" id="IPR016368">
    <property type="entry name" value="VapD"/>
</dbReference>
<dbReference type="InterPro" id="IPR019199">
    <property type="entry name" value="Virulence_VapD/CRISPR_Cas2"/>
</dbReference>
<dbReference type="Pfam" id="PF09827">
    <property type="entry name" value="CRISPR_Cas2"/>
    <property type="match status" value="1"/>
</dbReference>
<dbReference type="PIRSF" id="PIRSF002882">
    <property type="entry name" value="VapD"/>
    <property type="match status" value="1"/>
</dbReference>
<dbReference type="SUPFAM" id="SSF143430">
    <property type="entry name" value="TTP0101/SSO1404-like"/>
    <property type="match status" value="1"/>
</dbReference>
<proteinExistence type="inferred from homology"/>
<feature type="chain" id="PRO_0000217273" description="Endoribonuclease VapD homolog">
    <location>
        <begin position="1"/>
        <end position="95"/>
    </location>
</feature>
<protein>
    <recommendedName>
        <fullName>Endoribonuclease VapD homolog</fullName>
        <ecNumber>3.1.-.-</ecNumber>
    </recommendedName>
    <alternativeName>
        <fullName>Virulence-associated protein D homolog</fullName>
    </alternativeName>
</protein>
<comment type="function">
    <text evidence="1">Cleaves ssRNA, mostly between U:A.</text>
</comment>
<comment type="subunit">
    <text evidence="1">Homodimer.</text>
</comment>
<comment type="miscellaneous">
    <text>There is no ortholog for HP0967 in strain J99.</text>
</comment>
<comment type="similarity">
    <text evidence="2">Belongs to the VapD ribonuclease family.</text>
</comment>
<reference key="1">
    <citation type="journal article" date="1997" name="Nature">
        <title>The complete genome sequence of the gastric pathogen Helicobacter pylori.</title>
        <authorList>
            <person name="Tomb J.-F."/>
            <person name="White O."/>
            <person name="Kerlavage A.R."/>
            <person name="Clayton R.A."/>
            <person name="Sutton G.G."/>
            <person name="Fleischmann R.D."/>
            <person name="Ketchum K.A."/>
            <person name="Klenk H.-P."/>
            <person name="Gill S.R."/>
            <person name="Dougherty B.A."/>
            <person name="Nelson K.E."/>
            <person name="Quackenbush J."/>
            <person name="Zhou L."/>
            <person name="Kirkness E.F."/>
            <person name="Peterson S.N."/>
            <person name="Loftus B.J."/>
            <person name="Richardson D.L."/>
            <person name="Dodson R.J."/>
            <person name="Khalak H.G."/>
            <person name="Glodek A."/>
            <person name="McKenney K."/>
            <person name="FitzGerald L.M."/>
            <person name="Lee N."/>
            <person name="Adams M.D."/>
            <person name="Hickey E.K."/>
            <person name="Berg D.E."/>
            <person name="Gocayne J.D."/>
            <person name="Utterback T.R."/>
            <person name="Peterson J.D."/>
            <person name="Kelley J.M."/>
            <person name="Cotton M.D."/>
            <person name="Weidman J.F."/>
            <person name="Fujii C."/>
            <person name="Bowman C."/>
            <person name="Watthey L."/>
            <person name="Wallin E."/>
            <person name="Hayes W.S."/>
            <person name="Borodovsky M."/>
            <person name="Karp P.D."/>
            <person name="Smith H.O."/>
            <person name="Fraser C.M."/>
            <person name="Venter J.C."/>
        </authorList>
    </citation>
    <scope>NUCLEOTIDE SEQUENCE [LARGE SCALE GENOMIC DNA]</scope>
    <source>
        <strain>ATCC 700392 / 26695</strain>
    </source>
</reference>
<organism>
    <name type="scientific">Helicobacter pylori (strain ATCC 700392 / 26695)</name>
    <name type="common">Campylobacter pylori</name>
    <dbReference type="NCBI Taxonomy" id="85962"/>
    <lineage>
        <taxon>Bacteria</taxon>
        <taxon>Pseudomonadati</taxon>
        <taxon>Campylobacterota</taxon>
        <taxon>Epsilonproteobacteria</taxon>
        <taxon>Campylobacterales</taxon>
        <taxon>Helicobacteraceae</taxon>
        <taxon>Helicobacter</taxon>
    </lineage>
</organism>
<gene>
    <name type="ordered locus">HP_0967</name>
</gene>
<sequence length="95" mass="10778">MYAVTFDLDTNCLNENAVNLSKVYSDIRKFMEQHGFKWQQGSVYFGDETINAVTCVATVQILAKQIPSFAVCVKDVRMLKIEENNDLMPAIKIVL</sequence>
<evidence type="ECO:0000250" key="1"/>
<evidence type="ECO:0000305" key="2"/>
<accession>O25620</accession>
<keyword id="KW-0378">Hydrolase</keyword>
<keyword id="KW-0540">Nuclease</keyword>
<keyword id="KW-1185">Reference proteome</keyword>
<keyword id="KW-0843">Virulence</keyword>
<name>VAD2_HELPY</name>